<gene>
    <name type="primary">meaf6</name>
</gene>
<name>EAF6_XENLA</name>
<reference key="1">
    <citation type="submission" date="2005-04" db="EMBL/GenBank/DDBJ databases">
        <authorList>
            <consortium name="NIH - Xenopus Gene Collection (XGC) project"/>
        </authorList>
    </citation>
    <scope>NUCLEOTIDE SEQUENCE [LARGE SCALE MRNA]</scope>
    <source>
        <tissue>Egg</tissue>
    </source>
</reference>
<sequence>MAMHNKATPTQIPDTRRELAELVKRKQELAETLANLERQIYAFEGSYLEDTQMYGNIIRGWDRYLTNQKNSNSKNDRRNRKFKEAERLFSKSSVTSAAAVSSLAGVQDQLIEKREPGSGTESDNSPDFQNQENEPSQDDTEDLDGSLSGVKPQKAASSANSGGHHSSHKKRKNKNRHRLADKLLRSVI</sequence>
<accession>Q52KD8</accession>
<organism>
    <name type="scientific">Xenopus laevis</name>
    <name type="common">African clawed frog</name>
    <dbReference type="NCBI Taxonomy" id="8355"/>
    <lineage>
        <taxon>Eukaryota</taxon>
        <taxon>Metazoa</taxon>
        <taxon>Chordata</taxon>
        <taxon>Craniata</taxon>
        <taxon>Vertebrata</taxon>
        <taxon>Euteleostomi</taxon>
        <taxon>Amphibia</taxon>
        <taxon>Batrachia</taxon>
        <taxon>Anura</taxon>
        <taxon>Pipoidea</taxon>
        <taxon>Pipidae</taxon>
        <taxon>Xenopodinae</taxon>
        <taxon>Xenopus</taxon>
        <taxon>Xenopus</taxon>
    </lineage>
</organism>
<protein>
    <recommendedName>
        <fullName>Chromatin modification-related protein MEAF6</fullName>
        <shortName>MYST/Esa1-associated factor 6</shortName>
    </recommendedName>
    <alternativeName>
        <fullName>Esa1-associated factor 6 homolog</fullName>
        <shortName>Protein EAF6 homolog</shortName>
    </alternativeName>
</protein>
<evidence type="ECO:0000250" key="1">
    <source>
        <dbReference type="UniProtKB" id="Q9HAF1"/>
    </source>
</evidence>
<evidence type="ECO:0000255" key="2"/>
<evidence type="ECO:0000256" key="3">
    <source>
        <dbReference type="SAM" id="MobiDB-lite"/>
    </source>
</evidence>
<evidence type="ECO:0000305" key="4"/>
<feature type="chain" id="PRO_0000272613" description="Chromatin modification-related protein MEAF6">
    <location>
        <begin position="1"/>
        <end position="188"/>
    </location>
</feature>
<feature type="region of interest" description="Disordered" evidence="3">
    <location>
        <begin position="92"/>
        <end position="188"/>
    </location>
</feature>
<feature type="coiled-coil region" evidence="2">
    <location>
        <begin position="10"/>
        <end position="47"/>
    </location>
</feature>
<feature type="compositionally biased region" description="Low complexity" evidence="3">
    <location>
        <begin position="92"/>
        <end position="106"/>
    </location>
</feature>
<feature type="compositionally biased region" description="Polar residues" evidence="3">
    <location>
        <begin position="119"/>
        <end position="134"/>
    </location>
</feature>
<feature type="compositionally biased region" description="Acidic residues" evidence="3">
    <location>
        <begin position="135"/>
        <end position="144"/>
    </location>
</feature>
<feature type="compositionally biased region" description="Low complexity" evidence="3">
    <location>
        <begin position="154"/>
        <end position="164"/>
    </location>
</feature>
<feature type="compositionally biased region" description="Basic residues" evidence="3">
    <location>
        <begin position="165"/>
        <end position="177"/>
    </location>
</feature>
<feature type="compositionally biased region" description="Basic and acidic residues" evidence="3">
    <location>
        <begin position="178"/>
        <end position="188"/>
    </location>
</feature>
<proteinExistence type="evidence at transcript level"/>
<comment type="function">
    <text evidence="1">Component of the NuA4 histone acetyltransferase complex which is involved in transcriptional activation of select genes principally by acetylation of nucleosomal histone H4 and H2A. This modification may both alter nucleosome - DNA interactions and promote interaction of the modified histones with other proteins which positively regulate transcription. Component of HBO1 complexes, which specifically mediate acetylation of histone H3 at 'Lys-14' (H3K14ac), and have reduced activity toward histone H4. Component of the MOZ/MORF complex which has a histone H3 acetyltransferase activity (By similarity).</text>
</comment>
<comment type="subunit">
    <text evidence="1">Component of the NuA4 histone acetyltransferase complex. Component of the hbo1 complex. Component of the moz/morf complex (By similarity).</text>
</comment>
<comment type="subcellular location">
    <subcellularLocation>
        <location evidence="1">Nucleus</location>
        <location evidence="1">Nucleolus</location>
    </subcellularLocation>
    <subcellularLocation>
        <location evidence="1">Chromosome</location>
        <location evidence="1">Centromere</location>
        <location evidence="1">Kinetochore</location>
    </subcellularLocation>
</comment>
<comment type="similarity">
    <text evidence="4">Belongs to the EAF6 family.</text>
</comment>
<dbReference type="EMBL" id="BC094399">
    <property type="protein sequence ID" value="AAH94399.1"/>
    <property type="molecule type" value="mRNA"/>
</dbReference>
<dbReference type="RefSeq" id="NP_001090025.1">
    <property type="nucleotide sequence ID" value="NM_001096556.1"/>
</dbReference>
<dbReference type="SMR" id="Q52KD8"/>
<dbReference type="DNASU" id="735097"/>
<dbReference type="GeneID" id="735097"/>
<dbReference type="KEGG" id="xla:735097"/>
<dbReference type="AGR" id="Xenbase:XB-GENE-6254488"/>
<dbReference type="CTD" id="735097"/>
<dbReference type="Xenbase" id="XB-GENE-6254488">
    <property type="gene designation" value="meaf6.S"/>
</dbReference>
<dbReference type="OrthoDB" id="440324at2759"/>
<dbReference type="Proteomes" id="UP000186698">
    <property type="component" value="Chromosome 2S"/>
</dbReference>
<dbReference type="Bgee" id="735097">
    <property type="expression patterns" value="Expressed in egg cell and 19 other cell types or tissues"/>
</dbReference>
<dbReference type="GO" id="GO:0000776">
    <property type="term" value="C:kinetochore"/>
    <property type="evidence" value="ECO:0000250"/>
    <property type="project" value="UniProtKB"/>
</dbReference>
<dbReference type="GO" id="GO:0070776">
    <property type="term" value="C:MOZ/MORF histone acetyltransferase complex"/>
    <property type="evidence" value="ECO:0000250"/>
    <property type="project" value="UniProtKB"/>
</dbReference>
<dbReference type="GO" id="GO:0035267">
    <property type="term" value="C:NuA4 histone acetyltransferase complex"/>
    <property type="evidence" value="ECO:0000250"/>
    <property type="project" value="UniProtKB"/>
</dbReference>
<dbReference type="GO" id="GO:0005730">
    <property type="term" value="C:nucleolus"/>
    <property type="evidence" value="ECO:0000250"/>
    <property type="project" value="UniProtKB"/>
</dbReference>
<dbReference type="GO" id="GO:0006338">
    <property type="term" value="P:chromatin remodeling"/>
    <property type="evidence" value="ECO:0007669"/>
    <property type="project" value="GOC"/>
</dbReference>
<dbReference type="InterPro" id="IPR015418">
    <property type="entry name" value="Eaf6"/>
</dbReference>
<dbReference type="PANTHER" id="PTHR13476">
    <property type="entry name" value="CHROMATIN MODIFICATION-RELATED PROTEIN MEAF6"/>
    <property type="match status" value="1"/>
</dbReference>
<dbReference type="Pfam" id="PF09340">
    <property type="entry name" value="NuA4"/>
    <property type="match status" value="1"/>
</dbReference>
<keyword id="KW-0010">Activator</keyword>
<keyword id="KW-0137">Centromere</keyword>
<keyword id="KW-0156">Chromatin regulator</keyword>
<keyword id="KW-0158">Chromosome</keyword>
<keyword id="KW-0175">Coiled coil</keyword>
<keyword id="KW-0995">Kinetochore</keyword>
<keyword id="KW-0539">Nucleus</keyword>
<keyword id="KW-1185">Reference proteome</keyword>
<keyword id="KW-0804">Transcription</keyword>
<keyword id="KW-0805">Transcription regulation</keyword>